<reference key="1">
    <citation type="journal article" date="1991" name="Mol. Microbiol.">
        <title>Nucleotide sequence of the ipaBCD structural genes of Shigella dysenteriae.</title>
        <authorList>
            <person name="Yao R."/>
            <person name="Palchaudhuri S."/>
        </authorList>
    </citation>
    <scope>NUCLEOTIDE SEQUENCE [GENOMIC DNA]</scope>
    <source>
        <strain>CG097</strain>
    </source>
</reference>
<protein>
    <recommendedName>
        <fullName evidence="4">Type 3 secretion system translocon protein SctE</fullName>
        <shortName evidence="4">T3SS translocon protein SctE</shortName>
    </recommendedName>
    <alternativeName>
        <fullName>62 kDa antigen</fullName>
    </alternativeName>
    <alternativeName>
        <fullName>Invasin IpaB</fullName>
    </alternativeName>
</protein>
<keyword id="KW-1043">Host membrane</keyword>
<keyword id="KW-0472">Membrane</keyword>
<keyword id="KW-0614">Plasmid</keyword>
<keyword id="KW-0964">Secreted</keyword>
<keyword id="KW-0812">Transmembrane</keyword>
<keyword id="KW-1133">Transmembrane helix</keyword>
<keyword id="KW-0843">Virulence</keyword>
<geneLocation type="plasmid">
    <name>Invasion</name>
</geneLocation>
<comment type="function">
    <text evidence="1">Component of the type III secretion system (T3SS), also called injectisome, which is used to inject bacterial effector proteins into eukaryotic host cells (By similarity). IpaB/SctE and IpaC/SctB are inserted into the host membrane where they form a pore and allow the translocation of effector proteins into the cytosol of target cells (By similarity).</text>
</comment>
<comment type="subunit">
    <text evidence="1">The core secretion machinery of the T3SS is composed of approximately 20 different proteins, including cytoplasmic components, a base, an export apparatus and a needle (By similarity). This subunit is involved in the formation of a pore, called the translocon, in host membrane (By similarity).</text>
</comment>
<comment type="subcellular location">
    <subcellularLocation>
        <location evidence="1">Secreted</location>
    </subcellularLocation>
    <subcellularLocation>
        <location evidence="1">Host membrane</location>
        <topology evidence="2">Multi-pass membrane protein</topology>
    </subcellularLocation>
    <text evidence="1">Secreted via the type III secretion system (T3SS).</text>
</comment>
<comment type="similarity">
    <text evidence="4">Belongs to the SctE/SipB/YopB family.</text>
</comment>
<name>SCTE_SHIDY</name>
<dbReference type="EMBL" id="X60777">
    <property type="protein sequence ID" value="CAA43190.1"/>
    <property type="molecule type" value="Genomic_DNA"/>
</dbReference>
<dbReference type="PIR" id="S15577">
    <property type="entry name" value="S15577"/>
</dbReference>
<dbReference type="SMR" id="Q03945"/>
<dbReference type="TCDB" id="1.C.36.3.1">
    <property type="family name" value="the bacterial type iii-target cell pore (iiitcp) family"/>
</dbReference>
<dbReference type="GO" id="GO:0005576">
    <property type="term" value="C:extracellular region"/>
    <property type="evidence" value="ECO:0007669"/>
    <property type="project" value="UniProtKB-SubCell"/>
</dbReference>
<dbReference type="GO" id="GO:0033644">
    <property type="term" value="C:host cell membrane"/>
    <property type="evidence" value="ECO:0007669"/>
    <property type="project" value="UniProtKB-SubCell"/>
</dbReference>
<dbReference type="GO" id="GO:0016020">
    <property type="term" value="C:membrane"/>
    <property type="evidence" value="ECO:0007669"/>
    <property type="project" value="UniProtKB-KW"/>
</dbReference>
<dbReference type="Gene3D" id="1.20.120.330">
    <property type="entry name" value="Nucleotidyltransferases domain 2"/>
    <property type="match status" value="2"/>
</dbReference>
<dbReference type="InterPro" id="IPR006972">
    <property type="entry name" value="BipB-like_C"/>
</dbReference>
<dbReference type="InterPro" id="IPR032391">
    <property type="entry name" value="IpaB/BipB/SctE_N"/>
</dbReference>
<dbReference type="InterPro" id="IPR003895">
    <property type="entry name" value="T3SS_SctE/BipB"/>
</dbReference>
<dbReference type="NCBIfam" id="NF011901">
    <property type="entry name" value="PRK15374.1"/>
    <property type="match status" value="1"/>
</dbReference>
<dbReference type="Pfam" id="PF04888">
    <property type="entry name" value="SseC"/>
    <property type="match status" value="1"/>
</dbReference>
<dbReference type="Pfam" id="PF16535">
    <property type="entry name" value="T3SSipB"/>
    <property type="match status" value="1"/>
</dbReference>
<dbReference type="PRINTS" id="PR01375">
    <property type="entry name" value="BACINVASINB"/>
</dbReference>
<organism>
    <name type="scientific">Shigella dysenteriae</name>
    <dbReference type="NCBI Taxonomy" id="622"/>
    <lineage>
        <taxon>Bacteria</taxon>
        <taxon>Pseudomonadati</taxon>
        <taxon>Pseudomonadota</taxon>
        <taxon>Gammaproteobacteria</taxon>
        <taxon>Enterobacterales</taxon>
        <taxon>Enterobacteriaceae</taxon>
        <taxon>Shigella</taxon>
    </lineage>
</organism>
<feature type="chain" id="PRO_0000084219" description="Type 3 secretion system translocon protein SctE">
    <location>
        <begin position="1"/>
        <end position="580"/>
    </location>
</feature>
<feature type="transmembrane region" description="Helical" evidence="2">
    <location>
        <begin position="313"/>
        <end position="333"/>
    </location>
</feature>
<feature type="transmembrane region" description="Helical" evidence="2">
    <location>
        <begin position="399"/>
        <end position="419"/>
    </location>
</feature>
<evidence type="ECO:0000250" key="1">
    <source>
        <dbReference type="UniProtKB" id="P18011"/>
    </source>
</evidence>
<evidence type="ECO:0000255" key="2"/>
<evidence type="ECO:0000303" key="3">
    <source>
    </source>
</evidence>
<evidence type="ECO:0000305" key="4"/>
<proteinExistence type="inferred from homology"/>
<gene>
    <name evidence="1" type="primary">sctE</name>
    <name evidence="3" type="synonym">ipaB</name>
</gene>
<accession>Q03945</accession>
<sequence length="580" mass="62170">MHNVNTTTTGLSLAKILASTELGDNTIQAGNDAANKLFSLTIADLTANKNINTTNAHSTSNILIPELKAPKSLNASSQLTLLIGNLIQILGEKSLTALTNKITAWKSQQQARQQKNLEFSDKINTLLSETEGLTRDYEKQINKLKNADSKIKDLENKINQIQTRLSELDPDSPEKKKLSREEIQLTIKKDAAVKDRTLIEQKTLSIHSKLTDKSMQLEKEIDSFSAFSNTASAEQLSTQQKSLTGLASVTQLMATFIQLVGKNNEESLKNDLALFQSLQESRKTEMERKSDEYAAEVRKAEELNRVMGCVGKILGALLTIVSVVAAAFSGGASLALADVGLALMVTDAIVQAATGNSFMEQALNPIMKAVIEPLIKLLSDAFTKMLEGLGVDSKKAKMIGSILGAIAGALVLVAAVVLVATVGKQAAAKLAENIGKIIGKTLTDLIPKFLKNFSSQLDDLITNAVARLNKFLGAAGDEVISKQIISTHLNQAVLLGESVNSATQAGGSVASAVFQNSASTNLADLTLSKYQVEQLSKYISEAIEKFGQLQEVIADLLASMSNSQANRTDVAKAILQQTTA</sequence>